<protein>
    <recommendedName>
        <fullName evidence="1">Peptide methionine sulfoxide reductase MsrA</fullName>
        <shortName evidence="1">Protein-methionine-S-oxide reductase</shortName>
        <ecNumber evidence="1">1.8.4.11</ecNumber>
    </recommendedName>
    <alternativeName>
        <fullName evidence="1">Peptide-methionine (S)-S-oxide reductase</fullName>
        <shortName evidence="1">Peptide Met(O) reductase</shortName>
    </alternativeName>
</protein>
<name>MSRA_CLOBJ</name>
<dbReference type="EC" id="1.8.4.11" evidence="1"/>
<dbReference type="EMBL" id="CP001581">
    <property type="protein sequence ID" value="ACO85543.1"/>
    <property type="molecule type" value="Genomic_DNA"/>
</dbReference>
<dbReference type="RefSeq" id="WP_012704813.1">
    <property type="nucleotide sequence ID" value="NC_012563.1"/>
</dbReference>
<dbReference type="SMR" id="C1FPF1"/>
<dbReference type="KEGG" id="cby:CLM_2141"/>
<dbReference type="eggNOG" id="COG0225">
    <property type="taxonomic scope" value="Bacteria"/>
</dbReference>
<dbReference type="HOGENOM" id="CLU_031040_10_2_9"/>
<dbReference type="Proteomes" id="UP000001374">
    <property type="component" value="Chromosome"/>
</dbReference>
<dbReference type="GO" id="GO:0005737">
    <property type="term" value="C:cytoplasm"/>
    <property type="evidence" value="ECO:0007669"/>
    <property type="project" value="TreeGrafter"/>
</dbReference>
<dbReference type="GO" id="GO:0036456">
    <property type="term" value="F:L-methionine-(S)-S-oxide reductase activity"/>
    <property type="evidence" value="ECO:0007669"/>
    <property type="project" value="TreeGrafter"/>
</dbReference>
<dbReference type="GO" id="GO:0008113">
    <property type="term" value="F:peptide-methionine (S)-S-oxide reductase activity"/>
    <property type="evidence" value="ECO:0007669"/>
    <property type="project" value="UniProtKB-UniRule"/>
</dbReference>
<dbReference type="GO" id="GO:0034599">
    <property type="term" value="P:cellular response to oxidative stress"/>
    <property type="evidence" value="ECO:0007669"/>
    <property type="project" value="TreeGrafter"/>
</dbReference>
<dbReference type="GO" id="GO:0036211">
    <property type="term" value="P:protein modification process"/>
    <property type="evidence" value="ECO:0007669"/>
    <property type="project" value="UniProtKB-UniRule"/>
</dbReference>
<dbReference type="FunFam" id="3.30.1060.10:FF:000010">
    <property type="entry name" value="Peptide methionine sulfoxide reductase msrA"/>
    <property type="match status" value="1"/>
</dbReference>
<dbReference type="Gene3D" id="3.30.1060.10">
    <property type="entry name" value="Peptide methionine sulphoxide reductase MsrA"/>
    <property type="match status" value="1"/>
</dbReference>
<dbReference type="HAMAP" id="MF_01401">
    <property type="entry name" value="MsrA"/>
    <property type="match status" value="1"/>
</dbReference>
<dbReference type="InterPro" id="IPR002569">
    <property type="entry name" value="Met_Sox_Rdtase_MsrA_dom"/>
</dbReference>
<dbReference type="InterPro" id="IPR036509">
    <property type="entry name" value="Met_Sox_Rdtase_MsrA_sf"/>
</dbReference>
<dbReference type="InterPro" id="IPR050162">
    <property type="entry name" value="MsrA_MetSO_reductase"/>
</dbReference>
<dbReference type="NCBIfam" id="TIGR00401">
    <property type="entry name" value="msrA"/>
    <property type="match status" value="1"/>
</dbReference>
<dbReference type="PANTHER" id="PTHR42799">
    <property type="entry name" value="MITOCHONDRIAL PEPTIDE METHIONINE SULFOXIDE REDUCTASE"/>
    <property type="match status" value="1"/>
</dbReference>
<dbReference type="PANTHER" id="PTHR42799:SF2">
    <property type="entry name" value="MITOCHONDRIAL PEPTIDE METHIONINE SULFOXIDE REDUCTASE"/>
    <property type="match status" value="1"/>
</dbReference>
<dbReference type="Pfam" id="PF01625">
    <property type="entry name" value="PMSR"/>
    <property type="match status" value="1"/>
</dbReference>
<dbReference type="SUPFAM" id="SSF55068">
    <property type="entry name" value="Peptide methionine sulfoxide reductase"/>
    <property type="match status" value="1"/>
</dbReference>
<reference key="1">
    <citation type="submission" date="2008-10" db="EMBL/GenBank/DDBJ databases">
        <title>Genome sequence of Clostridium botulinum A2 Kyoto.</title>
        <authorList>
            <person name="Shrivastava S."/>
            <person name="Brinkac L.M."/>
            <person name="Brown J.L."/>
            <person name="Bruce D."/>
            <person name="Detter C.C."/>
            <person name="Johnson E.A."/>
            <person name="Munk C.A."/>
            <person name="Smith L.A."/>
            <person name="Smith T.J."/>
            <person name="Sutton G."/>
            <person name="Brettin T.S."/>
        </authorList>
    </citation>
    <scope>NUCLEOTIDE SEQUENCE [LARGE SCALE GENOMIC DNA]</scope>
    <source>
        <strain>Kyoto / Type A2</strain>
    </source>
</reference>
<feature type="chain" id="PRO_1000184560" description="Peptide methionine sulfoxide reductase MsrA">
    <location>
        <begin position="1"/>
        <end position="157"/>
    </location>
</feature>
<feature type="active site" evidence="1">
    <location>
        <position position="10"/>
    </location>
</feature>
<comment type="function">
    <text evidence="1">Has an important function as a repair enzyme for proteins that have been inactivated by oxidation. Catalyzes the reversible oxidation-reduction of methionine sulfoxide in proteins to methionine.</text>
</comment>
<comment type="catalytic activity">
    <reaction evidence="1">
        <text>L-methionyl-[protein] + [thioredoxin]-disulfide + H2O = L-methionyl-(S)-S-oxide-[protein] + [thioredoxin]-dithiol</text>
        <dbReference type="Rhea" id="RHEA:14217"/>
        <dbReference type="Rhea" id="RHEA-COMP:10698"/>
        <dbReference type="Rhea" id="RHEA-COMP:10700"/>
        <dbReference type="Rhea" id="RHEA-COMP:12313"/>
        <dbReference type="Rhea" id="RHEA-COMP:12315"/>
        <dbReference type="ChEBI" id="CHEBI:15377"/>
        <dbReference type="ChEBI" id="CHEBI:16044"/>
        <dbReference type="ChEBI" id="CHEBI:29950"/>
        <dbReference type="ChEBI" id="CHEBI:44120"/>
        <dbReference type="ChEBI" id="CHEBI:50058"/>
        <dbReference type="EC" id="1.8.4.11"/>
    </reaction>
</comment>
<comment type="catalytic activity">
    <reaction evidence="1">
        <text>[thioredoxin]-disulfide + L-methionine + H2O = L-methionine (S)-S-oxide + [thioredoxin]-dithiol</text>
        <dbReference type="Rhea" id="RHEA:19993"/>
        <dbReference type="Rhea" id="RHEA-COMP:10698"/>
        <dbReference type="Rhea" id="RHEA-COMP:10700"/>
        <dbReference type="ChEBI" id="CHEBI:15377"/>
        <dbReference type="ChEBI" id="CHEBI:29950"/>
        <dbReference type="ChEBI" id="CHEBI:50058"/>
        <dbReference type="ChEBI" id="CHEBI:57844"/>
        <dbReference type="ChEBI" id="CHEBI:58772"/>
        <dbReference type="EC" id="1.8.4.11"/>
    </reaction>
</comment>
<comment type="similarity">
    <text evidence="1">Belongs to the MsrA Met sulfoxide reductase family.</text>
</comment>
<sequence>MKEIVLAGGCFWGVEEYMSRIEGIVETKVGYANGIKENPSYEEVCSGVTGHAEACYIKYDESIISLEELLNKFWSIIDPTVLNKQGNDRGTQYRTCIFYLDEKDLNVIIKSKYQEQKNYRKPIVTEVEPLKCFYEAEEYHQKYLKKNPGGYCHIHLD</sequence>
<keyword id="KW-0560">Oxidoreductase</keyword>
<evidence type="ECO:0000255" key="1">
    <source>
        <dbReference type="HAMAP-Rule" id="MF_01401"/>
    </source>
</evidence>
<organism>
    <name type="scientific">Clostridium botulinum (strain Kyoto / Type A2)</name>
    <dbReference type="NCBI Taxonomy" id="536232"/>
    <lineage>
        <taxon>Bacteria</taxon>
        <taxon>Bacillati</taxon>
        <taxon>Bacillota</taxon>
        <taxon>Clostridia</taxon>
        <taxon>Eubacteriales</taxon>
        <taxon>Clostridiaceae</taxon>
        <taxon>Clostridium</taxon>
    </lineage>
</organism>
<gene>
    <name evidence="1" type="primary">msrA</name>
    <name type="ordered locus">CLM_2141</name>
</gene>
<accession>C1FPF1</accession>
<proteinExistence type="inferred from homology"/>